<dbReference type="EMBL" id="AY321172">
    <property type="protein sequence ID" value="AAQ84254.1"/>
    <property type="molecule type" value="Genomic_DNA"/>
</dbReference>
<dbReference type="GO" id="GO:0009507">
    <property type="term" value="C:chloroplast"/>
    <property type="evidence" value="ECO:0007669"/>
    <property type="project" value="UniProtKB-SubCell"/>
</dbReference>
<dbReference type="GO" id="GO:0003723">
    <property type="term" value="F:RNA binding"/>
    <property type="evidence" value="ECO:0007669"/>
    <property type="project" value="UniProtKB-KW"/>
</dbReference>
<dbReference type="GO" id="GO:0006397">
    <property type="term" value="P:mRNA processing"/>
    <property type="evidence" value="ECO:0007669"/>
    <property type="project" value="UniProtKB-KW"/>
</dbReference>
<dbReference type="GO" id="GO:0008380">
    <property type="term" value="P:RNA splicing"/>
    <property type="evidence" value="ECO:0007669"/>
    <property type="project" value="UniProtKB-UniRule"/>
</dbReference>
<dbReference type="GO" id="GO:0008033">
    <property type="term" value="P:tRNA processing"/>
    <property type="evidence" value="ECO:0007669"/>
    <property type="project" value="UniProtKB-KW"/>
</dbReference>
<dbReference type="HAMAP" id="MF_01390">
    <property type="entry name" value="MatK"/>
    <property type="match status" value="1"/>
</dbReference>
<dbReference type="InterPro" id="IPR024937">
    <property type="entry name" value="Domain_X"/>
</dbReference>
<dbReference type="InterPro" id="IPR002866">
    <property type="entry name" value="Maturase_MatK"/>
</dbReference>
<dbReference type="InterPro" id="IPR024942">
    <property type="entry name" value="Maturase_MatK_N"/>
</dbReference>
<dbReference type="PANTHER" id="PTHR34811">
    <property type="entry name" value="MATURASE K"/>
    <property type="match status" value="1"/>
</dbReference>
<dbReference type="PANTHER" id="PTHR34811:SF1">
    <property type="entry name" value="MATURASE K"/>
    <property type="match status" value="1"/>
</dbReference>
<dbReference type="Pfam" id="PF01348">
    <property type="entry name" value="Intron_maturas2"/>
    <property type="match status" value="1"/>
</dbReference>
<dbReference type="Pfam" id="PF01824">
    <property type="entry name" value="MatK_N"/>
    <property type="match status" value="1"/>
</dbReference>
<organism>
    <name type="scientific">Ochroma pyramidale</name>
    <name type="common">Balsa</name>
    <dbReference type="NCBI Taxonomy" id="66662"/>
    <lineage>
        <taxon>Eukaryota</taxon>
        <taxon>Viridiplantae</taxon>
        <taxon>Streptophyta</taxon>
        <taxon>Embryophyta</taxon>
        <taxon>Tracheophyta</taxon>
        <taxon>Spermatophyta</taxon>
        <taxon>Magnoliopsida</taxon>
        <taxon>eudicotyledons</taxon>
        <taxon>Gunneridae</taxon>
        <taxon>Pentapetalae</taxon>
        <taxon>rosids</taxon>
        <taxon>malvids</taxon>
        <taxon>Malvales</taxon>
        <taxon>Malvaceae</taxon>
        <taxon>Bombacoideae</taxon>
        <taxon>Ochroma</taxon>
    </lineage>
</organism>
<reference key="1">
    <citation type="submission" date="2003-06" db="EMBL/GenBank/DDBJ databases">
        <title>Phylogenetic analysis of Malvaceae sensu lato based on chloroplast and nuclear DNA sequences.</title>
        <authorList>
            <person name="Nyffeler R."/>
            <person name="Yen A."/>
            <person name="Alverson W.S."/>
            <person name="Bayer C."/>
            <person name="Blattner F."/>
            <person name="Whitlock B."/>
            <person name="Chase M.W."/>
            <person name="Baum D.A."/>
        </authorList>
    </citation>
    <scope>NUCLEOTIDE SEQUENCE [GENOMIC DNA]</scope>
</reference>
<protein>
    <recommendedName>
        <fullName evidence="1">Maturase K</fullName>
    </recommendedName>
    <alternativeName>
        <fullName evidence="1">Intron maturase</fullName>
    </alternativeName>
</protein>
<accession>Q6EIJ2</accession>
<name>MATK_OCHPY</name>
<evidence type="ECO:0000255" key="1">
    <source>
        <dbReference type="HAMAP-Rule" id="MF_01390"/>
    </source>
</evidence>
<feature type="chain" id="PRO_0000143554" description="Maturase K">
    <location>
        <begin position="1"/>
        <end position="504"/>
    </location>
</feature>
<keyword id="KW-0150">Chloroplast</keyword>
<keyword id="KW-0507">mRNA processing</keyword>
<keyword id="KW-0934">Plastid</keyword>
<keyword id="KW-0694">RNA-binding</keyword>
<keyword id="KW-0819">tRNA processing</keyword>
<gene>
    <name evidence="1" type="primary">matK</name>
</gene>
<sequence>MEEFQVYLELNRSRRHDFLYPLIFREYIYALAHDHGLNKSMIFFENQGYGNKFSSLIVKRLIIRMDQQNHLIISANDSNQNPFFGHNNNLYSQMISAGFAVIVEIPFSLRLVSYSQGEEVAKSHNLQSIHSIFPFLEDKFSHLNYVLDVLIPHPIHLEILVQALRYWVKDASSLHLLRFSLYEYCNLKSFITPKKSISIFNPRLFLFLYNSHACEYESIFLFLRNQSSHLRSTSSGAFLERIYFYGKIEYLVEVFYNDFQNNLWLFKDPFIHFIRYQGKAILASKDTSLLMNKWKYYFVDLWQYYFYMWSQSGRVRINQLSKYSLDFLGYLSSVRLNPSVVRSQMLENSFIIDNAMKKLDTRIPIISLIGSLSKAKFCNTLGHPISKPTWADSSDSDIIDRFVRICRNLSHYHSGSSKKKSLYQIKYILRFSCVKTLARKHKSTVRAFLKRLGSEFLEEFFTETEEEHVFSLIFPRVFFTSRKLYRGRIWYLDIICINALVNHE</sequence>
<comment type="function">
    <text evidence="1">Usually encoded in the trnK tRNA gene intron. Probably assists in splicing its own and other chloroplast group II introns.</text>
</comment>
<comment type="subcellular location">
    <subcellularLocation>
        <location>Plastid</location>
        <location>Chloroplast</location>
    </subcellularLocation>
</comment>
<comment type="similarity">
    <text evidence="1">Belongs to the intron maturase 2 family. MatK subfamily.</text>
</comment>
<proteinExistence type="inferred from homology"/>
<geneLocation type="chloroplast"/>